<reference key="1">
    <citation type="journal article" date="2008" name="DNA Res.">
        <title>Comparative genome analysis of Lactobacillus reuteri and Lactobacillus fermentum reveal a genomic island for reuterin and cobalamin production.</title>
        <authorList>
            <person name="Morita H."/>
            <person name="Toh H."/>
            <person name="Fukuda S."/>
            <person name="Horikawa H."/>
            <person name="Oshima K."/>
            <person name="Suzuki T."/>
            <person name="Murakami M."/>
            <person name="Hisamatsu S."/>
            <person name="Kato Y."/>
            <person name="Takizawa T."/>
            <person name="Fukuoka H."/>
            <person name="Yoshimura T."/>
            <person name="Itoh K."/>
            <person name="O'Sullivan D.J."/>
            <person name="McKay L.L."/>
            <person name="Ohno H."/>
            <person name="Kikuchi J."/>
            <person name="Masaoka T."/>
            <person name="Hattori M."/>
        </authorList>
    </citation>
    <scope>NUCLEOTIDE SEQUENCE [LARGE SCALE GENOMIC DNA]</scope>
    <source>
        <strain>NBRC 3956 / LMG 18251</strain>
    </source>
</reference>
<dbReference type="EMBL" id="AP008937">
    <property type="protein sequence ID" value="BAG27091.1"/>
    <property type="molecule type" value="Genomic_DNA"/>
</dbReference>
<dbReference type="RefSeq" id="WP_012391113.1">
    <property type="nucleotide sequence ID" value="NC_010610.1"/>
</dbReference>
<dbReference type="SMR" id="B2GBQ9"/>
<dbReference type="KEGG" id="lfe:LAF_0755"/>
<dbReference type="eggNOG" id="COG3705">
    <property type="taxonomic scope" value="Bacteria"/>
</dbReference>
<dbReference type="HOGENOM" id="CLU_025113_0_0_9"/>
<dbReference type="UniPathway" id="UPA00031">
    <property type="reaction ID" value="UER00006"/>
</dbReference>
<dbReference type="Proteomes" id="UP000001697">
    <property type="component" value="Chromosome"/>
</dbReference>
<dbReference type="GO" id="GO:0005737">
    <property type="term" value="C:cytoplasm"/>
    <property type="evidence" value="ECO:0007669"/>
    <property type="project" value="UniProtKB-SubCell"/>
</dbReference>
<dbReference type="GO" id="GO:0140096">
    <property type="term" value="F:catalytic activity, acting on a protein"/>
    <property type="evidence" value="ECO:0007669"/>
    <property type="project" value="UniProtKB-ARBA"/>
</dbReference>
<dbReference type="GO" id="GO:0016740">
    <property type="term" value="F:transferase activity"/>
    <property type="evidence" value="ECO:0007669"/>
    <property type="project" value="UniProtKB-ARBA"/>
</dbReference>
<dbReference type="GO" id="GO:0000105">
    <property type="term" value="P:L-histidine biosynthetic process"/>
    <property type="evidence" value="ECO:0007669"/>
    <property type="project" value="UniProtKB-UniRule"/>
</dbReference>
<dbReference type="CDD" id="cd00773">
    <property type="entry name" value="HisRS-like_core"/>
    <property type="match status" value="1"/>
</dbReference>
<dbReference type="Gene3D" id="3.30.930.10">
    <property type="entry name" value="Bira Bifunctional Protein, Domain 2"/>
    <property type="match status" value="1"/>
</dbReference>
<dbReference type="HAMAP" id="MF_00125">
    <property type="entry name" value="HisZ"/>
    <property type="match status" value="1"/>
</dbReference>
<dbReference type="InterPro" id="IPR045864">
    <property type="entry name" value="aa-tRNA-synth_II/BPL/LPL"/>
</dbReference>
<dbReference type="InterPro" id="IPR041715">
    <property type="entry name" value="HisRS-like_core"/>
</dbReference>
<dbReference type="InterPro" id="IPR004516">
    <property type="entry name" value="HisRS/HisZ"/>
</dbReference>
<dbReference type="InterPro" id="IPR004517">
    <property type="entry name" value="HisZ"/>
</dbReference>
<dbReference type="PANTHER" id="PTHR11476:SF7">
    <property type="entry name" value="HISTIDINE--TRNA LIGASE"/>
    <property type="match status" value="1"/>
</dbReference>
<dbReference type="PANTHER" id="PTHR11476">
    <property type="entry name" value="HISTIDYL-TRNA SYNTHETASE"/>
    <property type="match status" value="1"/>
</dbReference>
<dbReference type="Pfam" id="PF13393">
    <property type="entry name" value="tRNA-synt_His"/>
    <property type="match status" value="1"/>
</dbReference>
<dbReference type="PIRSF" id="PIRSF001549">
    <property type="entry name" value="His-tRNA_synth"/>
    <property type="match status" value="1"/>
</dbReference>
<dbReference type="SUPFAM" id="SSF55681">
    <property type="entry name" value="Class II aaRS and biotin synthetases"/>
    <property type="match status" value="1"/>
</dbReference>
<protein>
    <recommendedName>
        <fullName evidence="1">ATP phosphoribosyltransferase regulatory subunit</fullName>
    </recommendedName>
</protein>
<evidence type="ECO:0000255" key="1">
    <source>
        <dbReference type="HAMAP-Rule" id="MF_00125"/>
    </source>
</evidence>
<sequence>MQDYKLPAGLRDNFGPQATQKESVRHYLTGLFQRHHYTLIETSLLEYRDVFGPYELQAESLYRILEADGQDLVLRPDLTLPIARFLVTTNVSLPTSFAYVGEQFRRNRQLTGLYNQSTQAGIELVGFQSRRAELECLTVISELNRDLFNGRLLVELGQARLADLVLADLPANERQKEAIKAALFNKNVPDYEAAIAPFKRERHYPFLAEWTWLFGKADVVEKMVAPLWVNPAAREAMQEVLDLAKLVAQLGDQELLVDFSTAAPQAYYTGVTFKAYADQTSTYLVSGGRYDNLLANFQEKSEPAIGLGIDVTLIAQLLERSAPRDQAKPTLVFCQLADWPTFAKRYGGDPAYEACLADSLVAARTQAAATGQQLKVMNEEGDLIDA</sequence>
<organism>
    <name type="scientific">Limosilactobacillus fermentum (strain NBRC 3956 / LMG 18251)</name>
    <name type="common">Lactobacillus fermentum</name>
    <dbReference type="NCBI Taxonomy" id="334390"/>
    <lineage>
        <taxon>Bacteria</taxon>
        <taxon>Bacillati</taxon>
        <taxon>Bacillota</taxon>
        <taxon>Bacilli</taxon>
        <taxon>Lactobacillales</taxon>
        <taxon>Lactobacillaceae</taxon>
        <taxon>Limosilactobacillus</taxon>
    </lineage>
</organism>
<gene>
    <name evidence="1" type="primary">hisZ</name>
    <name type="ordered locus">LAF_0755</name>
</gene>
<keyword id="KW-0028">Amino-acid biosynthesis</keyword>
<keyword id="KW-0963">Cytoplasm</keyword>
<keyword id="KW-0368">Histidine biosynthesis</keyword>
<keyword id="KW-1185">Reference proteome</keyword>
<proteinExistence type="inferred from homology"/>
<feature type="chain" id="PRO_1000095461" description="ATP phosphoribosyltransferase regulatory subunit">
    <location>
        <begin position="1"/>
        <end position="386"/>
    </location>
</feature>
<name>HISZ_LIMF3</name>
<accession>B2GBQ9</accession>
<comment type="function">
    <text evidence="1">Required for the first step of histidine biosynthesis. May allow the feedback regulation of ATP phosphoribosyltransferase activity by histidine.</text>
</comment>
<comment type="pathway">
    <text evidence="1">Amino-acid biosynthesis; L-histidine biosynthesis; L-histidine from 5-phospho-alpha-D-ribose 1-diphosphate: step 1/9.</text>
</comment>
<comment type="subunit">
    <text evidence="1">Heteromultimer composed of HisG and HisZ subunits.</text>
</comment>
<comment type="subcellular location">
    <subcellularLocation>
        <location evidence="1">Cytoplasm</location>
    </subcellularLocation>
</comment>
<comment type="miscellaneous">
    <text>This function is generally fulfilled by the C-terminal part of HisG, which is missing in some bacteria such as this one.</text>
</comment>
<comment type="similarity">
    <text evidence="1">Belongs to the class-II aminoacyl-tRNA synthetase family. HisZ subfamily.</text>
</comment>